<sequence>MTEANGTTGGGAGDPEVIDVRRGMFGAKGSGDTSGYGRLIRSVALPGGSPRPYGGHFDEVVDALAAALGQDLYDASVERIVVYRDELTLEIARARLPVVAKTLRDDAALRFELCLGVSGVHYPGDAGRELHAAYPLMSITHNRRIRLEVAAPDDDPHIPSLFSVYPTTDWHERETYDFFGIIFDGHPSLTRIEMPDDWVGHPQRKDYPLGGIPVEYHGARIPPPDERRAYN</sequence>
<name>NUOC_MYCSJ</name>
<protein>
    <recommendedName>
        <fullName evidence="1">NADH-quinone oxidoreductase subunit C</fullName>
        <ecNumber evidence="1">7.1.1.-</ecNumber>
    </recommendedName>
    <alternativeName>
        <fullName evidence="1">NADH dehydrogenase I subunit C</fullName>
    </alternativeName>
    <alternativeName>
        <fullName evidence="1">NDH-1 subunit C</fullName>
    </alternativeName>
</protein>
<dbReference type="EC" id="7.1.1.-" evidence="1"/>
<dbReference type="EMBL" id="CP000580">
    <property type="protein sequence ID" value="ABN97346.1"/>
    <property type="molecule type" value="Genomic_DNA"/>
</dbReference>
<dbReference type="SMR" id="A3PWR9"/>
<dbReference type="KEGG" id="mjl:Mjls_1548"/>
<dbReference type="HOGENOM" id="CLU_042628_4_0_11"/>
<dbReference type="BioCyc" id="MSP164757:G1G8C-1565-MONOMER"/>
<dbReference type="GO" id="GO:0005886">
    <property type="term" value="C:plasma membrane"/>
    <property type="evidence" value="ECO:0007669"/>
    <property type="project" value="UniProtKB-SubCell"/>
</dbReference>
<dbReference type="GO" id="GO:0008137">
    <property type="term" value="F:NADH dehydrogenase (ubiquinone) activity"/>
    <property type="evidence" value="ECO:0007669"/>
    <property type="project" value="InterPro"/>
</dbReference>
<dbReference type="GO" id="GO:0050136">
    <property type="term" value="F:NADH:ubiquinone reductase (non-electrogenic) activity"/>
    <property type="evidence" value="ECO:0007669"/>
    <property type="project" value="UniProtKB-UniRule"/>
</dbReference>
<dbReference type="GO" id="GO:0048038">
    <property type="term" value="F:quinone binding"/>
    <property type="evidence" value="ECO:0007669"/>
    <property type="project" value="UniProtKB-KW"/>
</dbReference>
<dbReference type="Gene3D" id="3.30.460.80">
    <property type="entry name" value="NADH:ubiquinone oxidoreductase, 30kDa subunit"/>
    <property type="match status" value="1"/>
</dbReference>
<dbReference type="HAMAP" id="MF_01357">
    <property type="entry name" value="NDH1_NuoC"/>
    <property type="match status" value="1"/>
</dbReference>
<dbReference type="InterPro" id="IPR010218">
    <property type="entry name" value="NADH_DH_suC"/>
</dbReference>
<dbReference type="InterPro" id="IPR037232">
    <property type="entry name" value="NADH_quin_OxRdtase_su_C/D-like"/>
</dbReference>
<dbReference type="InterPro" id="IPR001268">
    <property type="entry name" value="NADH_UbQ_OxRdtase_30kDa_su"/>
</dbReference>
<dbReference type="NCBIfam" id="TIGR01961">
    <property type="entry name" value="NuoC_fam"/>
    <property type="match status" value="1"/>
</dbReference>
<dbReference type="NCBIfam" id="NF005856">
    <property type="entry name" value="PRK07785.1"/>
    <property type="match status" value="1"/>
</dbReference>
<dbReference type="PANTHER" id="PTHR10884:SF14">
    <property type="entry name" value="NADH DEHYDROGENASE [UBIQUINONE] IRON-SULFUR PROTEIN 3, MITOCHONDRIAL"/>
    <property type="match status" value="1"/>
</dbReference>
<dbReference type="PANTHER" id="PTHR10884">
    <property type="entry name" value="NADH DEHYDROGENASE UBIQUINONE IRON-SULFUR PROTEIN 3"/>
    <property type="match status" value="1"/>
</dbReference>
<dbReference type="Pfam" id="PF00329">
    <property type="entry name" value="Complex1_30kDa"/>
    <property type="match status" value="1"/>
</dbReference>
<dbReference type="SUPFAM" id="SSF143243">
    <property type="entry name" value="Nqo5-like"/>
    <property type="match status" value="1"/>
</dbReference>
<organism>
    <name type="scientific">Mycobacterium sp. (strain JLS)</name>
    <dbReference type="NCBI Taxonomy" id="164757"/>
    <lineage>
        <taxon>Bacteria</taxon>
        <taxon>Bacillati</taxon>
        <taxon>Actinomycetota</taxon>
        <taxon>Actinomycetes</taxon>
        <taxon>Mycobacteriales</taxon>
        <taxon>Mycobacteriaceae</taxon>
        <taxon>Mycobacterium</taxon>
    </lineage>
</organism>
<comment type="function">
    <text evidence="1">NDH-1 shuttles electrons from NADH, via FMN and iron-sulfur (Fe-S) centers, to quinones in the respiratory chain. The immediate electron acceptor for the enzyme in this species is believed to be a menaquinone. Couples the redox reaction to proton translocation (for every two electrons transferred, four hydrogen ions are translocated across the cytoplasmic membrane), and thus conserves the redox energy in a proton gradient.</text>
</comment>
<comment type="catalytic activity">
    <reaction evidence="1">
        <text>a quinone + NADH + 5 H(+)(in) = a quinol + NAD(+) + 4 H(+)(out)</text>
        <dbReference type="Rhea" id="RHEA:57888"/>
        <dbReference type="ChEBI" id="CHEBI:15378"/>
        <dbReference type="ChEBI" id="CHEBI:24646"/>
        <dbReference type="ChEBI" id="CHEBI:57540"/>
        <dbReference type="ChEBI" id="CHEBI:57945"/>
        <dbReference type="ChEBI" id="CHEBI:132124"/>
    </reaction>
</comment>
<comment type="subunit">
    <text evidence="1">NDH-1 is composed of 14 different subunits. Subunits NuoB, C, D, E, F, and G constitute the peripheral sector of the complex.</text>
</comment>
<comment type="subcellular location">
    <subcellularLocation>
        <location evidence="1">Cell membrane</location>
        <topology evidence="1">Peripheral membrane protein</topology>
        <orientation evidence="1">Cytoplasmic side</orientation>
    </subcellularLocation>
</comment>
<comment type="similarity">
    <text evidence="1">Belongs to the complex I 30 kDa subunit family.</text>
</comment>
<gene>
    <name evidence="1" type="primary">nuoC</name>
    <name type="ordered locus">Mjls_1548</name>
</gene>
<proteinExistence type="inferred from homology"/>
<keyword id="KW-1003">Cell membrane</keyword>
<keyword id="KW-0472">Membrane</keyword>
<keyword id="KW-0520">NAD</keyword>
<keyword id="KW-0874">Quinone</keyword>
<keyword id="KW-1278">Translocase</keyword>
<keyword id="KW-0813">Transport</keyword>
<accession>A3PWR9</accession>
<feature type="chain" id="PRO_0000358138" description="NADH-quinone oxidoreductase subunit C">
    <location>
        <begin position="1"/>
        <end position="231"/>
    </location>
</feature>
<evidence type="ECO:0000255" key="1">
    <source>
        <dbReference type="HAMAP-Rule" id="MF_01357"/>
    </source>
</evidence>
<reference key="1">
    <citation type="submission" date="2007-02" db="EMBL/GenBank/DDBJ databases">
        <title>Complete sequence of Mycobacterium sp. JLS.</title>
        <authorList>
            <consortium name="US DOE Joint Genome Institute"/>
            <person name="Copeland A."/>
            <person name="Lucas S."/>
            <person name="Lapidus A."/>
            <person name="Barry K."/>
            <person name="Detter J.C."/>
            <person name="Glavina del Rio T."/>
            <person name="Hammon N."/>
            <person name="Israni S."/>
            <person name="Dalin E."/>
            <person name="Tice H."/>
            <person name="Pitluck S."/>
            <person name="Chain P."/>
            <person name="Malfatti S."/>
            <person name="Shin M."/>
            <person name="Vergez L."/>
            <person name="Schmutz J."/>
            <person name="Larimer F."/>
            <person name="Land M."/>
            <person name="Hauser L."/>
            <person name="Kyrpides N."/>
            <person name="Mikhailova N."/>
            <person name="Miller C.D."/>
            <person name="Anderson A.J."/>
            <person name="Sims R.C."/>
            <person name="Richardson P."/>
        </authorList>
    </citation>
    <scope>NUCLEOTIDE SEQUENCE [LARGE SCALE GENOMIC DNA]</scope>
    <source>
        <strain>JLS</strain>
    </source>
</reference>